<evidence type="ECO:0000255" key="1">
    <source>
        <dbReference type="HAMAP-Rule" id="MF_00158"/>
    </source>
</evidence>
<organism>
    <name type="scientific">Albidiferax ferrireducens (strain ATCC BAA-621 / DSM 15236 / T118)</name>
    <name type="common">Rhodoferax ferrireducens</name>
    <dbReference type="NCBI Taxonomy" id="338969"/>
    <lineage>
        <taxon>Bacteria</taxon>
        <taxon>Pseudomonadati</taxon>
        <taxon>Pseudomonadota</taxon>
        <taxon>Betaproteobacteria</taxon>
        <taxon>Burkholderiales</taxon>
        <taxon>Comamonadaceae</taxon>
        <taxon>Rhodoferax</taxon>
    </lineage>
</organism>
<keyword id="KW-0067">ATP-binding</keyword>
<keyword id="KW-0963">Cytoplasm</keyword>
<keyword id="KW-0436">Ligase</keyword>
<keyword id="KW-0547">Nucleotide-binding</keyword>
<keyword id="KW-0566">Pantothenate biosynthesis</keyword>
<keyword id="KW-1185">Reference proteome</keyword>
<comment type="function">
    <text evidence="1">Catalyzes the condensation of pantoate with beta-alanine in an ATP-dependent reaction via a pantoyl-adenylate intermediate.</text>
</comment>
<comment type="catalytic activity">
    <reaction evidence="1">
        <text>(R)-pantoate + beta-alanine + ATP = (R)-pantothenate + AMP + diphosphate + H(+)</text>
        <dbReference type="Rhea" id="RHEA:10912"/>
        <dbReference type="ChEBI" id="CHEBI:15378"/>
        <dbReference type="ChEBI" id="CHEBI:15980"/>
        <dbReference type="ChEBI" id="CHEBI:29032"/>
        <dbReference type="ChEBI" id="CHEBI:30616"/>
        <dbReference type="ChEBI" id="CHEBI:33019"/>
        <dbReference type="ChEBI" id="CHEBI:57966"/>
        <dbReference type="ChEBI" id="CHEBI:456215"/>
        <dbReference type="EC" id="6.3.2.1"/>
    </reaction>
</comment>
<comment type="pathway">
    <text evidence="1">Cofactor biosynthesis; (R)-pantothenate biosynthesis; (R)-pantothenate from (R)-pantoate and beta-alanine: step 1/1.</text>
</comment>
<comment type="subunit">
    <text evidence="1">Homodimer.</text>
</comment>
<comment type="subcellular location">
    <subcellularLocation>
        <location evidence="1">Cytoplasm</location>
    </subcellularLocation>
</comment>
<comment type="miscellaneous">
    <text evidence="1">The reaction proceeds by a bi uni uni bi ping pong mechanism.</text>
</comment>
<comment type="similarity">
    <text evidence="1">Belongs to the pantothenate synthetase family.</text>
</comment>
<sequence>MKIVRTIAELRQHLSAYKHPAFVPTMGNLHEGHLSLLRQAKPLGDVLVASIFVNRLQFLPHEDFDTYPRTWEADCQALQAAGCDVLFAPGEQELYPEPQTYRVQPPAELADILEGHFRPGFFVGVSTVVMKLFACVQPRVAVFGQKDYQQLMVIRGMVRQFALPIAVLGVATLRAADGLALSSRNNYLTPLERAEAVHLSQSLQQMAKALRAGTVDIAALEQQAMVDLTARGWQPDYLAARRRADLQVPAADEVAALVQNDGLVLLGAARIGNTRLIDNLEV</sequence>
<reference key="1">
    <citation type="submission" date="2006-02" db="EMBL/GenBank/DDBJ databases">
        <title>Complete sequence of chromosome of Rhodoferax ferrireducens DSM 15236.</title>
        <authorList>
            <person name="Copeland A."/>
            <person name="Lucas S."/>
            <person name="Lapidus A."/>
            <person name="Barry K."/>
            <person name="Detter J.C."/>
            <person name="Glavina del Rio T."/>
            <person name="Hammon N."/>
            <person name="Israni S."/>
            <person name="Pitluck S."/>
            <person name="Brettin T."/>
            <person name="Bruce D."/>
            <person name="Han C."/>
            <person name="Tapia R."/>
            <person name="Gilna P."/>
            <person name="Kiss H."/>
            <person name="Schmutz J."/>
            <person name="Larimer F."/>
            <person name="Land M."/>
            <person name="Kyrpides N."/>
            <person name="Ivanova N."/>
            <person name="Richardson P."/>
        </authorList>
    </citation>
    <scope>NUCLEOTIDE SEQUENCE [LARGE SCALE GENOMIC DNA]</scope>
    <source>
        <strain>ATCC BAA-621 / DSM 15236 / T118</strain>
    </source>
</reference>
<proteinExistence type="inferred from homology"/>
<name>PANC_ALBFT</name>
<gene>
    <name evidence="1" type="primary">panC</name>
    <name type="ordered locus">Rfer_3034</name>
</gene>
<dbReference type="EC" id="6.3.2.1" evidence="1"/>
<dbReference type="EMBL" id="CP000267">
    <property type="protein sequence ID" value="ABD70745.1"/>
    <property type="molecule type" value="Genomic_DNA"/>
</dbReference>
<dbReference type="RefSeq" id="WP_011465311.1">
    <property type="nucleotide sequence ID" value="NC_007908.1"/>
</dbReference>
<dbReference type="SMR" id="Q21U08"/>
<dbReference type="STRING" id="338969.Rfer_3034"/>
<dbReference type="KEGG" id="rfr:Rfer_3034"/>
<dbReference type="eggNOG" id="COG0414">
    <property type="taxonomic scope" value="Bacteria"/>
</dbReference>
<dbReference type="HOGENOM" id="CLU_047148_0_0_4"/>
<dbReference type="OrthoDB" id="9773087at2"/>
<dbReference type="UniPathway" id="UPA00028">
    <property type="reaction ID" value="UER00005"/>
</dbReference>
<dbReference type="Proteomes" id="UP000008332">
    <property type="component" value="Chromosome"/>
</dbReference>
<dbReference type="GO" id="GO:0005829">
    <property type="term" value="C:cytosol"/>
    <property type="evidence" value="ECO:0007669"/>
    <property type="project" value="TreeGrafter"/>
</dbReference>
<dbReference type="GO" id="GO:0005524">
    <property type="term" value="F:ATP binding"/>
    <property type="evidence" value="ECO:0007669"/>
    <property type="project" value="UniProtKB-KW"/>
</dbReference>
<dbReference type="GO" id="GO:0004592">
    <property type="term" value="F:pantoate-beta-alanine ligase activity"/>
    <property type="evidence" value="ECO:0007669"/>
    <property type="project" value="UniProtKB-UniRule"/>
</dbReference>
<dbReference type="GO" id="GO:0015940">
    <property type="term" value="P:pantothenate biosynthetic process"/>
    <property type="evidence" value="ECO:0007669"/>
    <property type="project" value="UniProtKB-UniRule"/>
</dbReference>
<dbReference type="CDD" id="cd00560">
    <property type="entry name" value="PanC"/>
    <property type="match status" value="1"/>
</dbReference>
<dbReference type="Gene3D" id="3.40.50.620">
    <property type="entry name" value="HUPs"/>
    <property type="match status" value="1"/>
</dbReference>
<dbReference type="Gene3D" id="3.30.1300.10">
    <property type="entry name" value="Pantoate-beta-alanine ligase, C-terminal domain"/>
    <property type="match status" value="1"/>
</dbReference>
<dbReference type="HAMAP" id="MF_00158">
    <property type="entry name" value="PanC"/>
    <property type="match status" value="1"/>
</dbReference>
<dbReference type="InterPro" id="IPR004821">
    <property type="entry name" value="Cyt_trans-like"/>
</dbReference>
<dbReference type="InterPro" id="IPR003721">
    <property type="entry name" value="Pantoate_ligase"/>
</dbReference>
<dbReference type="InterPro" id="IPR042176">
    <property type="entry name" value="Pantoate_ligase_C"/>
</dbReference>
<dbReference type="InterPro" id="IPR014729">
    <property type="entry name" value="Rossmann-like_a/b/a_fold"/>
</dbReference>
<dbReference type="NCBIfam" id="TIGR00125">
    <property type="entry name" value="cyt_tran_rel"/>
    <property type="match status" value="1"/>
</dbReference>
<dbReference type="NCBIfam" id="TIGR00018">
    <property type="entry name" value="panC"/>
    <property type="match status" value="1"/>
</dbReference>
<dbReference type="PANTHER" id="PTHR21299">
    <property type="entry name" value="CYTIDYLATE KINASE/PANTOATE-BETA-ALANINE LIGASE"/>
    <property type="match status" value="1"/>
</dbReference>
<dbReference type="PANTHER" id="PTHR21299:SF1">
    <property type="entry name" value="PANTOATE--BETA-ALANINE LIGASE"/>
    <property type="match status" value="1"/>
</dbReference>
<dbReference type="Pfam" id="PF02569">
    <property type="entry name" value="Pantoate_ligase"/>
    <property type="match status" value="1"/>
</dbReference>
<dbReference type="SUPFAM" id="SSF52374">
    <property type="entry name" value="Nucleotidylyl transferase"/>
    <property type="match status" value="1"/>
</dbReference>
<accession>Q21U08</accession>
<feature type="chain" id="PRO_0000305530" description="Pantothenate synthetase">
    <location>
        <begin position="1"/>
        <end position="282"/>
    </location>
</feature>
<feature type="active site" description="Proton donor" evidence="1">
    <location>
        <position position="33"/>
    </location>
</feature>
<feature type="binding site" evidence="1">
    <location>
        <begin position="26"/>
        <end position="33"/>
    </location>
    <ligand>
        <name>ATP</name>
        <dbReference type="ChEBI" id="CHEBI:30616"/>
    </ligand>
</feature>
<feature type="binding site" evidence="1">
    <location>
        <position position="57"/>
    </location>
    <ligand>
        <name>(R)-pantoate</name>
        <dbReference type="ChEBI" id="CHEBI:15980"/>
    </ligand>
</feature>
<feature type="binding site" evidence="1">
    <location>
        <position position="57"/>
    </location>
    <ligand>
        <name>beta-alanine</name>
        <dbReference type="ChEBI" id="CHEBI:57966"/>
    </ligand>
</feature>
<feature type="binding site" evidence="1">
    <location>
        <begin position="144"/>
        <end position="147"/>
    </location>
    <ligand>
        <name>ATP</name>
        <dbReference type="ChEBI" id="CHEBI:30616"/>
    </ligand>
</feature>
<feature type="binding site" evidence="1">
    <location>
        <position position="150"/>
    </location>
    <ligand>
        <name>(R)-pantoate</name>
        <dbReference type="ChEBI" id="CHEBI:15980"/>
    </ligand>
</feature>
<feature type="binding site" evidence="1">
    <location>
        <position position="173"/>
    </location>
    <ligand>
        <name>ATP</name>
        <dbReference type="ChEBI" id="CHEBI:30616"/>
    </ligand>
</feature>
<feature type="binding site" evidence="1">
    <location>
        <begin position="181"/>
        <end position="184"/>
    </location>
    <ligand>
        <name>ATP</name>
        <dbReference type="ChEBI" id="CHEBI:30616"/>
    </ligand>
</feature>
<protein>
    <recommendedName>
        <fullName evidence="1">Pantothenate synthetase</fullName>
        <shortName evidence="1">PS</shortName>
        <ecNumber evidence="1">6.3.2.1</ecNumber>
    </recommendedName>
    <alternativeName>
        <fullName evidence="1">Pantoate--beta-alanine ligase</fullName>
    </alternativeName>
    <alternativeName>
        <fullName evidence="1">Pantoate-activating enzyme</fullName>
    </alternativeName>
</protein>